<sequence length="520" mass="56046">MPFSNETEMSQCSNAKRRVNDPLTGPKNCSTSSTDSGVILNDNVAAFRPEKETKDRGTGEGQFQSKSEEKTESKRISVEHTVNITTENVGKTSSPAVSIRSTTISVVSIDDNAIDSSSIDSDSEAEAEDYTVQKLGHQVTYPPNSSHLRDLNQGLTVISRHVAPGEAAVPPPNPLEAGIVAKQILNGNLAVATPTSPAGGATQGIGSIALTNSTDVTFGDKHFYEGPVTIQQFLIDNRDKWKPGEGPAGGQDNPAFNGGPSTNGSAPGSKHEDPAQTPPICPFLPNTVGRKAVTVTVVFVTLTFLLGIVLATTTNLFGKTLNQSKIRDDDDYRQNIPINSTIDLDNIGGGLILRFVERQQWLAQPPQKEIPDLELPVGLVIALPTNSENCSTQAICVLRVRLLQTYDIESSQKCDIAYNFLIGGDGNVYVGRGWNKMGAHMNNINYDSQSLSFAYIGSFKTIQPSAKQLSVTRLLLERGVKLGKIAPSYRFTASSKLMPSVTDFKADALYASFANWTHWS</sequence>
<gene>
    <name type="primary">PGRP-LC</name>
    <name type="synonym">ird7</name>
    <name type="synonym">PGRPLC</name>
    <name type="ORF">CG4432</name>
</gene>
<keyword id="KW-0002">3D-structure</keyword>
<keyword id="KW-0025">Alternative splicing</keyword>
<keyword id="KW-1015">Disulfide bond</keyword>
<keyword id="KW-0325">Glycoprotein</keyword>
<keyword id="KW-0391">Immunity</keyword>
<keyword id="KW-0399">Innate immunity</keyword>
<keyword id="KW-0472">Membrane</keyword>
<keyword id="KW-1185">Reference proteome</keyword>
<keyword id="KW-0735">Signal-anchor</keyword>
<keyword id="KW-0812">Transmembrane</keyword>
<keyword id="KW-1133">Transmembrane helix</keyword>
<name>PGPLC_DROME</name>
<reference evidence="18" key="1">
    <citation type="journal article" date="2000" name="Proc. Natl. Acad. Sci. U.S.A.">
        <title>A family of peptidoglycan recognition proteins in the fruit fly Drosophila melanogaster.</title>
        <authorList>
            <person name="Werner T."/>
            <person name="Liu G."/>
            <person name="Kang D."/>
            <person name="Ekengren S."/>
            <person name="Steiner H."/>
            <person name="Hultmark D."/>
        </authorList>
    </citation>
    <scope>NUCLEOTIDE SEQUENCE [MRNA] (ISOFORMS A; X AND Y)</scope>
    <scope>SUBCELLULAR LOCATION</scope>
    <scope>TISSUE SPECIFICITY</scope>
    <source>
        <strain evidence="4">Berkeley</strain>
        <strain evidence="4">Canton-S</strain>
        <tissue evidence="4">Embryo</tissue>
        <tissue evidence="4">Head</tissue>
        <tissue evidence="4">Larva</tissue>
        <tissue evidence="4">Pupae</tissue>
    </source>
</reference>
<reference evidence="18" key="2">
    <citation type="journal article" date="2002" name="Science">
        <title>Requirement for a peptidoglycan recognition protein (PGRP) in Relish activation and antibacterial immune responses in Drosophila.</title>
        <authorList>
            <person name="Choe K.-M."/>
            <person name="Werner T."/>
            <person name="Stoeven S."/>
            <person name="Hultmark D."/>
            <person name="Anderson K.V."/>
        </authorList>
    </citation>
    <scope>NUCLEOTIDE SEQUENCE [MRNA] (ISOFORM X)</scope>
    <scope>FUNCTION</scope>
    <scope>SUBCELLULAR LOCATION</scope>
    <scope>DEVELOPMENTAL STAGE</scope>
    <source>
        <strain evidence="5">Berkeley</strain>
        <tissue evidence="5">Larva</tissue>
        <tissue evidence="5">Pupae</tissue>
    </source>
</reference>
<reference evidence="18" key="3">
    <citation type="journal article" date="2003" name="J. Biol. Chem.">
        <title>Functional diversity of the Drosophila PGRP-LC gene cluster in the response to lipopolysaccharide and peptidoglycan.</title>
        <authorList>
            <person name="Werner T."/>
            <person name="Borge-Renberg K."/>
            <person name="Mellroth P."/>
            <person name="Steiner H."/>
            <person name="Hultmark D."/>
        </authorList>
    </citation>
    <scope>NUCLEOTIDE SEQUENCE [MRNA] (ISOFORM Y)</scope>
    <scope>FUNCTION (ISOFORMS A; X AND Y)</scope>
    <source>
        <strain evidence="20">Canton-S</strain>
    </source>
</reference>
<reference evidence="18" key="4">
    <citation type="journal article" date="2000" name="Science">
        <title>The genome sequence of Drosophila melanogaster.</title>
        <authorList>
            <person name="Adams M.D."/>
            <person name="Celniker S.E."/>
            <person name="Holt R.A."/>
            <person name="Evans C.A."/>
            <person name="Gocayne J.D."/>
            <person name="Amanatides P.G."/>
            <person name="Scherer S.E."/>
            <person name="Li P.W."/>
            <person name="Hoskins R.A."/>
            <person name="Galle R.F."/>
            <person name="George R.A."/>
            <person name="Lewis S.E."/>
            <person name="Richards S."/>
            <person name="Ashburner M."/>
            <person name="Henderson S.N."/>
            <person name="Sutton G.G."/>
            <person name="Wortman J.R."/>
            <person name="Yandell M.D."/>
            <person name="Zhang Q."/>
            <person name="Chen L.X."/>
            <person name="Brandon R.C."/>
            <person name="Rogers Y.-H.C."/>
            <person name="Blazej R.G."/>
            <person name="Champe M."/>
            <person name="Pfeiffer B.D."/>
            <person name="Wan K.H."/>
            <person name="Doyle C."/>
            <person name="Baxter E.G."/>
            <person name="Helt G."/>
            <person name="Nelson C.R."/>
            <person name="Miklos G.L.G."/>
            <person name="Abril J.F."/>
            <person name="Agbayani A."/>
            <person name="An H.-J."/>
            <person name="Andrews-Pfannkoch C."/>
            <person name="Baldwin D."/>
            <person name="Ballew R.M."/>
            <person name="Basu A."/>
            <person name="Baxendale J."/>
            <person name="Bayraktaroglu L."/>
            <person name="Beasley E.M."/>
            <person name="Beeson K.Y."/>
            <person name="Benos P.V."/>
            <person name="Berman B.P."/>
            <person name="Bhandari D."/>
            <person name="Bolshakov S."/>
            <person name="Borkova D."/>
            <person name="Botchan M.R."/>
            <person name="Bouck J."/>
            <person name="Brokstein P."/>
            <person name="Brottier P."/>
            <person name="Burtis K.C."/>
            <person name="Busam D.A."/>
            <person name="Butler H."/>
            <person name="Cadieu E."/>
            <person name="Center A."/>
            <person name="Chandra I."/>
            <person name="Cherry J.M."/>
            <person name="Cawley S."/>
            <person name="Dahlke C."/>
            <person name="Davenport L.B."/>
            <person name="Davies P."/>
            <person name="de Pablos B."/>
            <person name="Delcher A."/>
            <person name="Deng Z."/>
            <person name="Mays A.D."/>
            <person name="Dew I."/>
            <person name="Dietz S.M."/>
            <person name="Dodson K."/>
            <person name="Doup L.E."/>
            <person name="Downes M."/>
            <person name="Dugan-Rocha S."/>
            <person name="Dunkov B.C."/>
            <person name="Dunn P."/>
            <person name="Durbin K.J."/>
            <person name="Evangelista C.C."/>
            <person name="Ferraz C."/>
            <person name="Ferriera S."/>
            <person name="Fleischmann W."/>
            <person name="Fosler C."/>
            <person name="Gabrielian A.E."/>
            <person name="Garg N.S."/>
            <person name="Gelbart W.M."/>
            <person name="Glasser K."/>
            <person name="Glodek A."/>
            <person name="Gong F."/>
            <person name="Gorrell J.H."/>
            <person name="Gu Z."/>
            <person name="Guan P."/>
            <person name="Harris M."/>
            <person name="Harris N.L."/>
            <person name="Harvey D.A."/>
            <person name="Heiman T.J."/>
            <person name="Hernandez J.R."/>
            <person name="Houck J."/>
            <person name="Hostin D."/>
            <person name="Houston K.A."/>
            <person name="Howland T.J."/>
            <person name="Wei M.-H."/>
            <person name="Ibegwam C."/>
            <person name="Jalali M."/>
            <person name="Kalush F."/>
            <person name="Karpen G.H."/>
            <person name="Ke Z."/>
            <person name="Kennison J.A."/>
            <person name="Ketchum K.A."/>
            <person name="Kimmel B.E."/>
            <person name="Kodira C.D."/>
            <person name="Kraft C.L."/>
            <person name="Kravitz S."/>
            <person name="Kulp D."/>
            <person name="Lai Z."/>
            <person name="Lasko P."/>
            <person name="Lei Y."/>
            <person name="Levitsky A.A."/>
            <person name="Li J.H."/>
            <person name="Li Z."/>
            <person name="Liang Y."/>
            <person name="Lin X."/>
            <person name="Liu X."/>
            <person name="Mattei B."/>
            <person name="McIntosh T.C."/>
            <person name="McLeod M.P."/>
            <person name="McPherson D."/>
            <person name="Merkulov G."/>
            <person name="Milshina N.V."/>
            <person name="Mobarry C."/>
            <person name="Morris J."/>
            <person name="Moshrefi A."/>
            <person name="Mount S.M."/>
            <person name="Moy M."/>
            <person name="Murphy B."/>
            <person name="Murphy L."/>
            <person name="Muzny D.M."/>
            <person name="Nelson D.L."/>
            <person name="Nelson D.R."/>
            <person name="Nelson K.A."/>
            <person name="Nixon K."/>
            <person name="Nusskern D.R."/>
            <person name="Pacleb J.M."/>
            <person name="Palazzolo M."/>
            <person name="Pittman G.S."/>
            <person name="Pan S."/>
            <person name="Pollard J."/>
            <person name="Puri V."/>
            <person name="Reese M.G."/>
            <person name="Reinert K."/>
            <person name="Remington K."/>
            <person name="Saunders R.D.C."/>
            <person name="Scheeler F."/>
            <person name="Shen H."/>
            <person name="Shue B.C."/>
            <person name="Siden-Kiamos I."/>
            <person name="Simpson M."/>
            <person name="Skupski M.P."/>
            <person name="Smith T.J."/>
            <person name="Spier E."/>
            <person name="Spradling A.C."/>
            <person name="Stapleton M."/>
            <person name="Strong R."/>
            <person name="Sun E."/>
            <person name="Svirskas R."/>
            <person name="Tector C."/>
            <person name="Turner R."/>
            <person name="Venter E."/>
            <person name="Wang A.H."/>
            <person name="Wang X."/>
            <person name="Wang Z.-Y."/>
            <person name="Wassarman D.A."/>
            <person name="Weinstock G.M."/>
            <person name="Weissenbach J."/>
            <person name="Williams S.M."/>
            <person name="Woodage T."/>
            <person name="Worley K.C."/>
            <person name="Wu D."/>
            <person name="Yang S."/>
            <person name="Yao Q.A."/>
            <person name="Ye J."/>
            <person name="Yeh R.-F."/>
            <person name="Zaveri J.S."/>
            <person name="Zhan M."/>
            <person name="Zhang G."/>
            <person name="Zhao Q."/>
            <person name="Zheng L."/>
            <person name="Zheng X.H."/>
            <person name="Zhong F.N."/>
            <person name="Zhong W."/>
            <person name="Zhou X."/>
            <person name="Zhu S.C."/>
            <person name="Zhu X."/>
            <person name="Smith H.O."/>
            <person name="Gibbs R.A."/>
            <person name="Myers E.W."/>
            <person name="Rubin G.M."/>
            <person name="Venter J.C."/>
        </authorList>
    </citation>
    <scope>NUCLEOTIDE SEQUENCE [LARGE SCALE GENOMIC DNA]</scope>
    <source>
        <strain evidence="3">Berkeley</strain>
    </source>
</reference>
<reference evidence="18" key="5">
    <citation type="journal article" date="2002" name="Genome Biol.">
        <title>Annotation of the Drosophila melanogaster euchromatic genome: a systematic review.</title>
        <authorList>
            <person name="Misra S."/>
            <person name="Crosby M.A."/>
            <person name="Mungall C.J."/>
            <person name="Matthews B.B."/>
            <person name="Campbell K.S."/>
            <person name="Hradecky P."/>
            <person name="Huang Y."/>
            <person name="Kaminker J.S."/>
            <person name="Millburn G.H."/>
            <person name="Prochnik S.E."/>
            <person name="Smith C.D."/>
            <person name="Tupy J.L."/>
            <person name="Whitfield E.J."/>
            <person name="Bayraktaroglu L."/>
            <person name="Berman B.P."/>
            <person name="Bettencourt B.R."/>
            <person name="Celniker S.E."/>
            <person name="de Grey A.D.N.J."/>
            <person name="Drysdale R.A."/>
            <person name="Harris N.L."/>
            <person name="Richter J."/>
            <person name="Russo S."/>
            <person name="Schroeder A.J."/>
            <person name="Shu S.Q."/>
            <person name="Stapleton M."/>
            <person name="Yamada C."/>
            <person name="Ashburner M."/>
            <person name="Gelbart W.M."/>
            <person name="Rubin G.M."/>
            <person name="Lewis S.E."/>
        </authorList>
    </citation>
    <scope>GENOME REANNOTATION</scope>
    <scope>ALTERNATIVE SPLICING</scope>
    <source>
        <strain>Berkeley</strain>
    </source>
</reference>
<reference evidence="18" key="6">
    <citation type="journal article" date="2002" name="Genome Biol.">
        <title>A Drosophila full-length cDNA resource.</title>
        <authorList>
            <person name="Stapleton M."/>
            <person name="Carlson J.W."/>
            <person name="Brokstein P."/>
            <person name="Yu C."/>
            <person name="Champe M."/>
            <person name="George R.A."/>
            <person name="Guarin H."/>
            <person name="Kronmiller B."/>
            <person name="Pacleb J.M."/>
            <person name="Park S."/>
            <person name="Wan K.H."/>
            <person name="Rubin G.M."/>
            <person name="Celniker S.E."/>
        </authorList>
    </citation>
    <scope>NUCLEOTIDE SEQUENCE [LARGE SCALE MRNA] (ISOFORM X)</scope>
    <source>
        <strain evidence="6">Berkeley</strain>
        <tissue evidence="6">Larva</tissue>
        <tissue evidence="6">Pupae</tissue>
    </source>
</reference>
<reference key="7">
    <citation type="submission" date="2006-06" db="EMBL/GenBank/DDBJ databases">
        <authorList>
            <person name="Stapleton M."/>
            <person name="Carlson J.W."/>
            <person name="Chavez C."/>
            <person name="Frise E."/>
            <person name="George R.A."/>
            <person name="Pacleb J.M."/>
            <person name="Park S."/>
            <person name="Wan K.H."/>
            <person name="Yu C."/>
            <person name="Celniker S.E."/>
        </authorList>
    </citation>
    <scope>NUCLEOTIDE SEQUENCE [LARGE SCALE MRNA] (ISOFORM X)</scope>
    <source>
        <strain>Berkeley</strain>
    </source>
</reference>
<reference key="8">
    <citation type="journal article" date="2011" name="PLoS Pathog.">
        <title>Toll-8/Tollo negatively regulates antimicrobial response in the Drosophila respiratory epithelium.</title>
        <authorList>
            <person name="Akhouayri I."/>
            <person name="Turc C."/>
            <person name="Royet J."/>
            <person name="Charroux B."/>
        </authorList>
    </citation>
    <scope>FUNCTION</scope>
    <scope>DISRUPTION PHENOTYPE</scope>
</reference>
<reference key="9">
    <citation type="journal article" date="2005" name="Proc. Natl. Acad. Sci. U.S.A.">
        <title>Structure of the ectodomain of Drosophila peptidoglycan-recognition protein LCa suggests a molecular mechanism for pattern recognition.</title>
        <authorList>
            <person name="Chang C.-I."/>
            <person name="Ihara K."/>
            <person name="Chelliah Y."/>
            <person name="Mengin-Lecreulx D."/>
            <person name="Wakatsuki S."/>
            <person name="Deisenhofer J."/>
        </authorList>
    </citation>
    <scope>X-RAY CRYSTALLOGRAPHY (2.5 ANGSTROMS) OF 355-520</scope>
    <scope>DISULFIDE BOND</scope>
    <scope>FUNCTION (ISOFORMS A AND X)</scope>
</reference>
<reference key="10">
    <citation type="journal article" date="2006" name="Science">
        <title>Structure of tracheal cytotoxin in complex with a heterodimeric pattern-recognition receptor.</title>
        <authorList>
            <person name="Chang C.-I."/>
            <person name="Chelliah Y."/>
            <person name="Borek D."/>
            <person name="Mengin-Lecreulx D."/>
            <person name="Deisenhofer J."/>
        </authorList>
    </citation>
    <scope>X-RAY CRYSTALLOGRAPHY (2.1 ANGSTROMS) OF 355-520 IN COMPLEX WITH PEPTIDOGLYCAN FRAGMENT</scope>
    <scope>DISULFIDE BOND</scope>
    <scope>GLYCOSYLATION AT ASN-389 AND ASN-515</scope>
</reference>
<reference key="11">
    <citation type="journal article" date="2011" name="Self/Nonself">
        <title>Cleavage of PGRP-LC receptor in the Drosophila IMD pathway in response to live bacterial infection in S2 cells.</title>
        <authorList>
            <person name="Schmidt R.L."/>
            <person name="Rinaldo F.M."/>
            <person name="Hesse S.E."/>
            <person name="Hamada M."/>
            <person name="Ortiz Z."/>
            <person name="Beleford D.T."/>
            <person name="Page-McCaw A."/>
            <person name="Platt J.L."/>
            <person name="Tang A.H."/>
        </authorList>
    </citation>
    <scope>ACTIVITY REGULATION BY PROTEOLYTIC CLEAVAGE</scope>
    <scope>SUBCELLULAR LOCATION</scope>
    <scope>PROTEOLYTIC CLEAVAGE</scope>
</reference>
<reference key="12">
    <citation type="journal article" date="2019" name="Cell Host Microbe">
        <title>Sugar Alcohols of Polyol Pathway Serve as Alarmins to Mediate Local-Systemic Innate Immune Communication in Drosophila.</title>
        <authorList>
            <person name="Yang S."/>
            <person name="Zhao Y."/>
            <person name="Yu J."/>
            <person name="Fan Z."/>
            <person name="Gong S.T."/>
            <person name="Tang H."/>
            <person name="Pan L."/>
        </authorList>
    </citation>
    <scope>ACTIVITY REGULATION BY PROTEOLYTIC CLEAVAGE</scope>
    <scope>PROTEOLYTIC CLEAVAGE</scope>
</reference>
<protein>
    <recommendedName>
        <fullName>Peptidoglycan-recognition protein LC</fullName>
    </recommendedName>
    <alternativeName>
        <fullName>Immune response deficient 7 protein</fullName>
    </alternativeName>
</protein>
<dbReference type="EMBL" id="AF207539">
    <property type="protein sequence ID" value="AAG23733.1"/>
    <property type="molecule type" value="mRNA"/>
</dbReference>
<dbReference type="EMBL" id="AF500096">
    <property type="protein sequence ID" value="AAM18530.1"/>
    <property type="molecule type" value="mRNA"/>
</dbReference>
<dbReference type="EMBL" id="AY327466">
    <property type="protein sequence ID" value="AAQ16306.1"/>
    <property type="molecule type" value="mRNA"/>
</dbReference>
<dbReference type="EMBL" id="AE014296">
    <property type="protein sequence ID" value="AAF50302.3"/>
    <property type="molecule type" value="Genomic_DNA"/>
</dbReference>
<dbReference type="EMBL" id="AE014296">
    <property type="protein sequence ID" value="AAN11957.1"/>
    <property type="molecule type" value="Genomic_DNA"/>
</dbReference>
<dbReference type="EMBL" id="AE014296">
    <property type="protein sequence ID" value="AAS65052.1"/>
    <property type="molecule type" value="Genomic_DNA"/>
</dbReference>
<dbReference type="EMBL" id="AY119048">
    <property type="protein sequence ID" value="AAM50908.1"/>
    <property type="molecule type" value="mRNA"/>
</dbReference>
<dbReference type="EMBL" id="BT025958">
    <property type="protein sequence ID" value="ABG02202.1"/>
    <property type="molecule type" value="mRNA"/>
</dbReference>
<dbReference type="RefSeq" id="NP_001163396.1">
    <molecule id="Q9GNK5-2"/>
    <property type="nucleotide sequence ID" value="NM_001169925.1"/>
</dbReference>
<dbReference type="RefSeq" id="NP_001246693.1">
    <molecule id="Q9GNK5-1"/>
    <property type="nucleotide sequence ID" value="NM_001259764.1"/>
</dbReference>
<dbReference type="RefSeq" id="NP_648298.1">
    <molecule id="Q9GNK5-1"/>
    <property type="nucleotide sequence ID" value="NM_140041.4"/>
</dbReference>
<dbReference type="RefSeq" id="NP_729468.2">
    <molecule id="Q9GNK5-2"/>
    <property type="nucleotide sequence ID" value="NM_168324.4"/>
</dbReference>
<dbReference type="RefSeq" id="NP_996030.1">
    <property type="nucleotide sequence ID" value="NM_206308.4"/>
</dbReference>
<dbReference type="PDB" id="1Z6I">
    <property type="method" value="X-ray"/>
    <property type="resolution" value="2.50 A"/>
    <property type="chains" value="A=355-520"/>
</dbReference>
<dbReference type="PDB" id="2F2L">
    <property type="method" value="X-ray"/>
    <property type="resolution" value="2.10 A"/>
    <property type="chains" value="A=355-520, X=418-434"/>
</dbReference>
<dbReference type="PDBsum" id="1Z6I"/>
<dbReference type="PDBsum" id="2F2L"/>
<dbReference type="SMR" id="Q9GNK5"/>
<dbReference type="BioGRID" id="64460">
    <property type="interactions" value="89"/>
</dbReference>
<dbReference type="FunCoup" id="Q9GNK5">
    <property type="interactions" value="100"/>
</dbReference>
<dbReference type="IntAct" id="Q9GNK5">
    <property type="interactions" value="4"/>
</dbReference>
<dbReference type="MINT" id="Q9GNK5"/>
<dbReference type="STRING" id="7227.FBpp0088492"/>
<dbReference type="GlyCosmos" id="Q9GNK5">
    <property type="glycosylation" value="2 sites, No reported glycans"/>
</dbReference>
<dbReference type="GlyGen" id="Q9GNK5">
    <property type="glycosylation" value="2 sites"/>
</dbReference>
<dbReference type="iPTMnet" id="Q9GNK5"/>
<dbReference type="PaxDb" id="7227-FBpp0088492"/>
<dbReference type="DNASU" id="39063"/>
<dbReference type="EnsemblMetazoa" id="FBtr0089490">
    <molecule id="Q9GNK5-2"/>
    <property type="protein sequence ID" value="FBpp0088491"/>
    <property type="gene ID" value="FBgn0035976"/>
</dbReference>
<dbReference type="EnsemblMetazoa" id="FBtr0089491">
    <molecule id="Q9GNK5-1"/>
    <property type="protein sequence ID" value="FBpp0088492"/>
    <property type="gene ID" value="FBgn0035976"/>
</dbReference>
<dbReference type="EnsemblMetazoa" id="FBtr0300290">
    <molecule id="Q9GNK5-2"/>
    <property type="protein sequence ID" value="FBpp0289518"/>
    <property type="gene ID" value="FBgn0035976"/>
</dbReference>
<dbReference type="EnsemblMetazoa" id="FBtr0308349">
    <molecule id="Q9GNK5-1"/>
    <property type="protein sequence ID" value="FBpp0300668"/>
    <property type="gene ID" value="FBgn0035976"/>
</dbReference>
<dbReference type="GeneID" id="39063"/>
<dbReference type="KEGG" id="dme:Dmel_CG4432"/>
<dbReference type="AGR" id="FB:FBgn0035976"/>
<dbReference type="CTD" id="39063"/>
<dbReference type="FlyBase" id="FBgn0035976">
    <property type="gene designation" value="PGRP-LC"/>
</dbReference>
<dbReference type="VEuPathDB" id="VectorBase:FBgn0035976"/>
<dbReference type="eggNOG" id="ENOG502S2KY">
    <property type="taxonomic scope" value="Eukaryota"/>
</dbReference>
<dbReference type="InParanoid" id="Q9GNK5"/>
<dbReference type="OMA" id="TQSECTF"/>
<dbReference type="OrthoDB" id="10001926at2759"/>
<dbReference type="PhylomeDB" id="Q9GNK5"/>
<dbReference type="Reactome" id="R-DME-209171">
    <molecule id="Q9GNK5-2"/>
    <property type="pathway name" value="Peptidoglycans (PGN) bind to a peptidoglycan recognition protein receptor, PGRP-LC/LE"/>
</dbReference>
<dbReference type="Reactome" id="R-DME-209266">
    <property type="pathway name" value="Peptidoglycan bound PGRP-LC/LE oligomerises"/>
</dbReference>
<dbReference type="Reactome" id="R-DME-214397">
    <property type="pathway name" value="Assembly of the PGN:PGRP-LC/LE receptor 'signalling complex'"/>
</dbReference>
<dbReference type="Reactome" id="R-DME-214399">
    <property type="pathway name" value="Activated IkappaB kinase (IKK) complex, Phospho IRD5:KEY dimer, phosphorylates REL in the PGN:PGRP-LC/LE receptor 'signalling complex'"/>
</dbReference>
<dbReference type="Reactome" id="R-DME-214411">
    <property type="pathway name" value="REL binds to DREDD in the PGN:PGRP-LC/LE receptor 'signalling complex'"/>
</dbReference>
<dbReference type="Reactome" id="R-DME-214416">
    <property type="pathway name" value="Phosphorylated REL is cleaved by and dissociates from DREDD"/>
</dbReference>
<dbReference type="BioGRID-ORCS" id="39063">
    <property type="hits" value="0 hits in 3 CRISPR screens"/>
</dbReference>
<dbReference type="EvolutionaryTrace" id="Q9GNK5"/>
<dbReference type="GenomeRNAi" id="39063"/>
<dbReference type="PRO" id="PR:Q9GNK5"/>
<dbReference type="Proteomes" id="UP000000803">
    <property type="component" value="Chromosome 3L"/>
</dbReference>
<dbReference type="Bgee" id="FBgn0035976">
    <property type="expression patterns" value="Expressed in hemocyte (sensu Nematoda and Protostomia) in haltere and 128 other cell types or tissues"/>
</dbReference>
<dbReference type="ExpressionAtlas" id="Q9GNK5">
    <property type="expression patterns" value="baseline and differential"/>
</dbReference>
<dbReference type="GO" id="GO:0016327">
    <property type="term" value="C:apicolateral plasma membrane"/>
    <property type="evidence" value="ECO:0000314"/>
    <property type="project" value="FlyBase"/>
</dbReference>
<dbReference type="GO" id="GO:0031410">
    <property type="term" value="C:cytoplasmic vesicle"/>
    <property type="evidence" value="ECO:0000314"/>
    <property type="project" value="FlyBase"/>
</dbReference>
<dbReference type="GO" id="GO:0016020">
    <property type="term" value="C:membrane"/>
    <property type="evidence" value="ECO:0000303"/>
    <property type="project" value="UniProtKB"/>
</dbReference>
<dbReference type="GO" id="GO:0005886">
    <property type="term" value="C:plasma membrane"/>
    <property type="evidence" value="ECO:0000314"/>
    <property type="project" value="FlyBase"/>
</dbReference>
<dbReference type="GO" id="GO:0098793">
    <property type="term" value="C:presynapse"/>
    <property type="evidence" value="ECO:0000314"/>
    <property type="project" value="FlyBase"/>
</dbReference>
<dbReference type="GO" id="GO:0001875">
    <property type="term" value="F:lipopolysaccharide immune receptor activity"/>
    <property type="evidence" value="ECO:0000315"/>
    <property type="project" value="FlyBase"/>
</dbReference>
<dbReference type="GO" id="GO:0042834">
    <property type="term" value="F:peptidoglycan binding"/>
    <property type="evidence" value="ECO:0000314"/>
    <property type="project" value="FlyBase"/>
</dbReference>
<dbReference type="GO" id="GO:0016019">
    <property type="term" value="F:peptidoglycan immune receptor activity"/>
    <property type="evidence" value="ECO:0000315"/>
    <property type="project" value="FlyBase"/>
</dbReference>
<dbReference type="GO" id="GO:0008270">
    <property type="term" value="F:zinc ion binding"/>
    <property type="evidence" value="ECO:0007669"/>
    <property type="project" value="InterPro"/>
</dbReference>
<dbReference type="GO" id="GO:0019731">
    <property type="term" value="P:antibacterial humoral response"/>
    <property type="evidence" value="ECO:0000315"/>
    <property type="project" value="FlyBase"/>
</dbReference>
<dbReference type="GO" id="GO:0050829">
    <property type="term" value="P:defense response to Gram-negative bacterium"/>
    <property type="evidence" value="ECO:0000314"/>
    <property type="project" value="FlyBase"/>
</dbReference>
<dbReference type="GO" id="GO:0051607">
    <property type="term" value="P:defense response to virus"/>
    <property type="evidence" value="ECO:0000315"/>
    <property type="project" value="FlyBase"/>
</dbReference>
<dbReference type="GO" id="GO:0006955">
    <property type="term" value="P:immune response"/>
    <property type="evidence" value="ECO:0000315"/>
    <property type="project" value="FlyBase"/>
</dbReference>
<dbReference type="GO" id="GO:0045087">
    <property type="term" value="P:innate immune response"/>
    <property type="evidence" value="ECO:0007669"/>
    <property type="project" value="UniProtKB-KW"/>
</dbReference>
<dbReference type="GO" id="GO:0061057">
    <property type="term" value="P:peptidoglycan recognition protein signaling pathway"/>
    <property type="evidence" value="ECO:0000314"/>
    <property type="project" value="FlyBase"/>
</dbReference>
<dbReference type="GO" id="GO:0006963">
    <property type="term" value="P:positive regulation of antibacterial peptide biosynthetic process"/>
    <property type="evidence" value="ECO:0000315"/>
    <property type="project" value="FlyBase"/>
</dbReference>
<dbReference type="GO" id="GO:0006964">
    <property type="term" value="P:positive regulation of biosynthetic process of antibacterial peptides active against Gram-negative bacteria"/>
    <property type="evidence" value="ECO:0000315"/>
    <property type="project" value="FlyBase"/>
</dbReference>
<dbReference type="GO" id="GO:0002920">
    <property type="term" value="P:regulation of humoral immune response"/>
    <property type="evidence" value="ECO:0000315"/>
    <property type="project" value="FlyBase"/>
</dbReference>
<dbReference type="GO" id="GO:0035007">
    <property type="term" value="P:regulation of melanization defense response"/>
    <property type="evidence" value="ECO:0000315"/>
    <property type="project" value="FlyBase"/>
</dbReference>
<dbReference type="GO" id="GO:0048167">
    <property type="term" value="P:regulation of synaptic plasticity"/>
    <property type="evidence" value="ECO:0000315"/>
    <property type="project" value="FlyBase"/>
</dbReference>
<dbReference type="GO" id="GO:0009617">
    <property type="term" value="P:response to bacterium"/>
    <property type="evidence" value="ECO:0000315"/>
    <property type="project" value="FlyBase"/>
</dbReference>
<dbReference type="CDD" id="cd06583">
    <property type="entry name" value="PGRP"/>
    <property type="match status" value="1"/>
</dbReference>
<dbReference type="Gene3D" id="3.40.80.10">
    <property type="entry name" value="Peptidoglycan recognition protein-like"/>
    <property type="match status" value="1"/>
</dbReference>
<dbReference type="InterPro" id="IPR036505">
    <property type="entry name" value="Amidase/PGRP_sf"/>
</dbReference>
<dbReference type="InterPro" id="IPR002502">
    <property type="entry name" value="Amidase_domain"/>
</dbReference>
<dbReference type="InterPro" id="IPR015510">
    <property type="entry name" value="PGRP"/>
</dbReference>
<dbReference type="InterPro" id="IPR006619">
    <property type="entry name" value="PGRP_domain_met/bac"/>
</dbReference>
<dbReference type="PANTHER" id="PTHR11022">
    <property type="entry name" value="PEPTIDOGLYCAN RECOGNITION PROTEIN"/>
    <property type="match status" value="1"/>
</dbReference>
<dbReference type="PANTHER" id="PTHR11022:SF41">
    <property type="entry name" value="PEPTIDOGLYCAN-RECOGNITION PROTEIN LC-RELATED"/>
    <property type="match status" value="1"/>
</dbReference>
<dbReference type="Pfam" id="PF01510">
    <property type="entry name" value="Amidase_2"/>
    <property type="match status" value="1"/>
</dbReference>
<dbReference type="SMART" id="SM00701">
    <property type="entry name" value="PGRP"/>
    <property type="match status" value="1"/>
</dbReference>
<dbReference type="SUPFAM" id="SSF55846">
    <property type="entry name" value="N-acetylmuramoyl-L-alanine amidase-like"/>
    <property type="match status" value="1"/>
</dbReference>
<evidence type="ECO:0000255" key="1"/>
<evidence type="ECO:0000256" key="2">
    <source>
        <dbReference type="SAM" id="MobiDB-lite"/>
    </source>
</evidence>
<evidence type="ECO:0000269" key="3">
    <source>
    </source>
</evidence>
<evidence type="ECO:0000269" key="4">
    <source>
    </source>
</evidence>
<evidence type="ECO:0000269" key="5">
    <source>
    </source>
</evidence>
<evidence type="ECO:0000269" key="6">
    <source>
    </source>
</evidence>
<evidence type="ECO:0000269" key="7">
    <source>
    </source>
</evidence>
<evidence type="ECO:0000269" key="8">
    <source>
    </source>
</evidence>
<evidence type="ECO:0000269" key="9">
    <source>
    </source>
</evidence>
<evidence type="ECO:0000269" key="10">
    <source>
    </source>
</evidence>
<evidence type="ECO:0000269" key="11">
    <source>
    </source>
</evidence>
<evidence type="ECO:0000269" key="12">
    <source>
    </source>
</evidence>
<evidence type="ECO:0000303" key="13">
    <source>
    </source>
</evidence>
<evidence type="ECO:0000303" key="14">
    <source>
    </source>
</evidence>
<evidence type="ECO:0000303" key="15">
    <source>
    </source>
</evidence>
<evidence type="ECO:0000303" key="16">
    <source>
    </source>
</evidence>
<evidence type="ECO:0000303" key="17">
    <source ref="7"/>
</evidence>
<evidence type="ECO:0000305" key="18"/>
<evidence type="ECO:0000312" key="19">
    <source>
        <dbReference type="EMBL" id="AAG23733.1"/>
    </source>
</evidence>
<evidence type="ECO:0000312" key="20">
    <source>
        <dbReference type="EMBL" id="AAQ16306.1"/>
    </source>
</evidence>
<evidence type="ECO:0007829" key="21">
    <source>
        <dbReference type="PDB" id="2F2L"/>
    </source>
</evidence>
<accession>Q9GNK5</accession>
<accession>Q1EBX6</accession>
<accession>Q7YW58</accession>
<accession>Q8T5Q2</accession>
<accession>Q9VSV9</accession>
<feature type="chain" id="PRO_0000220624" description="Peptidoglycan-recognition protein LC">
    <location>
        <begin position="1"/>
        <end position="520"/>
    </location>
</feature>
<feature type="topological domain" description="Cytoplasmic" evidence="1">
    <location>
        <begin position="1"/>
        <end position="291"/>
    </location>
</feature>
<feature type="transmembrane region" description="Helical; Signal-anchor for type II membrane protein" evidence="1">
    <location>
        <begin position="292"/>
        <end position="312"/>
    </location>
</feature>
<feature type="topological domain" description="Extracellular" evidence="1">
    <location>
        <begin position="313"/>
        <end position="520"/>
    </location>
</feature>
<feature type="domain" description="N-acetylmuramoyl-L-alanine amidase" evidence="1">
    <location>
        <begin position="412"/>
        <end position="490"/>
    </location>
</feature>
<feature type="region of interest" description="Disordered" evidence="2">
    <location>
        <begin position="1"/>
        <end position="78"/>
    </location>
</feature>
<feature type="region of interest" description="Disordered" evidence="2">
    <location>
        <begin position="239"/>
        <end position="278"/>
    </location>
</feature>
<feature type="compositionally biased region" description="Polar residues" evidence="2">
    <location>
        <begin position="1"/>
        <end position="14"/>
    </location>
</feature>
<feature type="compositionally biased region" description="Polar residues" evidence="2">
    <location>
        <begin position="27"/>
        <end position="36"/>
    </location>
</feature>
<feature type="compositionally biased region" description="Basic and acidic residues" evidence="2">
    <location>
        <begin position="48"/>
        <end position="58"/>
    </location>
</feature>
<feature type="compositionally biased region" description="Basic and acidic residues" evidence="2">
    <location>
        <begin position="66"/>
        <end position="78"/>
    </location>
</feature>
<feature type="glycosylation site" description="N-linked (GlcNAc...) asparagine" evidence="9">
    <location>
        <position position="389"/>
    </location>
</feature>
<feature type="glycosylation site" description="N-linked (GlcNAc...) asparagine" evidence="9">
    <location>
        <position position="515"/>
    </location>
</feature>
<feature type="disulfide bond" evidence="8 9">
    <location>
        <begin position="390"/>
        <end position="396"/>
    </location>
</feature>
<feature type="splice variant" id="VSP_050759" description="In isoform x." evidence="13 14 15 17">
    <original>SKIRDDDDYRQNIPINSTIDLDNIGGGLILRFVERQQWLAQPPQKEIPDLELPVGLVIALPTNSENCSTQAICVLRVRLLQTYDIESSQKCDIAYNFLIGGDGNVYVGRGWNKMGAHMNNINYDSQSLSFAYIGSFKTIQPSAKQLSVTRLLLERGVKLGKIAPSYRFTASSKLMPSVTDFKADALYASFANWTHWS</original>
    <variation>TDLDVIDNSTLVILKVAEWGGRPAKRMLDAQQLPINRVVISHTAAEGCESREVCSARVNVVQSFHMDSWGWDHIGYNFLVGGDGRVYEGRGWDYVGAHTKGYNRGSIGISFIGTFTTRKPNERQLEACQLLLQEGVRLKKLTTNYRLYGHRQLSATESPGEELYKIIKKWPHWSHEI</variation>
    <location>
        <begin position="324"/>
        <end position="520"/>
    </location>
</feature>
<feature type="splice variant" id="VSP_050760" description="In isoform y." evidence="13 16">
    <original>SKIRDDDDYRQNIPINSTIDLDNIGGGLILRFVERQQWLAQPPQKEIPDLELPVGLVIALPTNSENCSTQAICVLRVRLLQTYDIESSQKCDIAYNFLIGGDGNVYVGRGWNKMGAHMNNINYDSQSLSFAYIGSFKTIQPSAKQLSVTRLLLERGVKLGKIAPSYRFTASSKLMPSVTDFKADALYASFANWTHWS</original>
    <variation>TNDPEIHVDGKLVVISIKGWGGMPTRGNLKPLKLPVSKVIISETPPEICTTQDSCSYWTRVTQSRHMDTFNWSQVGYNFLVGGDGRIYEGRGWNYMGDHTRDNNNNSIGITFLGTFRRQEPTPKSLEACQLLIAQGVRLKKLKPDYQLLGHRQITGTLMPGEELYRIIQTWNNWYNLTKTWPDLHMTQ</variation>
    <location>
        <begin position="324"/>
        <end position="520"/>
    </location>
</feature>
<feature type="helix" evidence="21">
    <location>
        <begin position="355"/>
        <end position="357"/>
    </location>
</feature>
<feature type="helix" evidence="21">
    <location>
        <begin position="358"/>
        <end position="361"/>
    </location>
</feature>
<feature type="strand" evidence="21">
    <location>
        <begin position="375"/>
        <end position="384"/>
    </location>
</feature>
<feature type="helix" evidence="21">
    <location>
        <begin position="393"/>
        <end position="409"/>
    </location>
</feature>
<feature type="strand" evidence="21">
    <location>
        <begin position="419"/>
        <end position="422"/>
    </location>
</feature>
<feature type="strand" evidence="21">
    <location>
        <begin position="428"/>
        <end position="432"/>
    </location>
</feature>
<feature type="turn" evidence="21">
    <location>
        <begin position="433"/>
        <end position="435"/>
    </location>
</feature>
<feature type="strand" evidence="21">
    <location>
        <begin position="440"/>
        <end position="442"/>
    </location>
</feature>
<feature type="helix" evidence="21">
    <location>
        <begin position="444"/>
        <end position="447"/>
    </location>
</feature>
<feature type="strand" evidence="21">
    <location>
        <begin position="451"/>
        <end position="457"/>
    </location>
</feature>
<feature type="strand" evidence="21">
    <location>
        <begin position="460"/>
        <end position="462"/>
    </location>
</feature>
<feature type="helix" evidence="21">
    <location>
        <begin position="466"/>
        <end position="481"/>
    </location>
</feature>
<feature type="strand" evidence="21">
    <location>
        <begin position="484"/>
        <end position="493"/>
    </location>
</feature>
<feature type="helix" evidence="21">
    <location>
        <begin position="494"/>
        <end position="497"/>
    </location>
</feature>
<feature type="helix" evidence="21">
    <location>
        <begin position="502"/>
        <end position="504"/>
    </location>
</feature>
<feature type="helix" evidence="21">
    <location>
        <begin position="507"/>
        <end position="511"/>
    </location>
</feature>
<feature type="turn" evidence="21">
    <location>
        <begin position="512"/>
        <end position="515"/>
    </location>
</feature>
<feature type="sequence conflict" description="In Ref. 4; AAS65052." evidence="18" ref="4">
    <original>I</original>
    <variation>V</variation>
    <location sequence="Q9GNK5-3">
        <position position="338"/>
    </location>
</feature>
<feature type="sequence conflict" description="In Ref. 4; AAS65052." evidence="18" ref="4">
    <original>L</original>
    <variation>F</variation>
    <location sequence="Q9GNK5-3">
        <position position="355"/>
    </location>
</feature>
<feature type="sequence conflict" description="In Ref. 3; AAQ16306." evidence="18" ref="3">
    <original>T</original>
    <variation>K</variation>
    <location sequence="Q9GNK5-3">
        <position position="373"/>
    </location>
</feature>
<comment type="function">
    <text evidence="5 7 8 10">Major activator of the imd/Relish pathway and is likely to encode a pattern recognition molecule for the humoral immune response (PubMed:11872802, PubMed:22022271). Required for Relish processing and nuclear translocation following proteolytic cleavage (PubMed:11872802). Involved in the response to lipopolysaccharide (LPS) and peptidoglycan of Gram-negative bacteria (PubMed:11872802). The different isoforms probably display different recognition capabilities to various microbial patterns (PubMed:12777387, PubMed:16006509).</text>
</comment>
<comment type="function">
    <molecule>Isoform a</molecule>
    <text evidence="7 8">Mediates the response to LPS and Gram-negative bacteria.</text>
</comment>
<comment type="function">
    <molecule>Isoform x</molecule>
    <text evidence="7 8">Mediates the response to LPS, peptidoglycan and Gram-negative bacteria.</text>
</comment>
<comment type="activity regulation">
    <text evidence="11 12">Activated by proteolytic cleavage in response to Gram-negative bacterial infection; cleavage may be mediated by endogenous proteases, such as the metalloprotease Mmp2 or elastase, or by bacterially expressed proteases such as the surface serine protease OmpT.</text>
</comment>
<comment type="subcellular location">
    <subcellularLocation>
        <location evidence="4 5 11">Membrane</location>
        <topology evidence="4 5">Single-pass type II membrane protein</topology>
    </subcellularLocation>
</comment>
<comment type="alternative products">
    <event type="alternative splicing"/>
    <isoform>
        <id>Q9GNK5-1</id>
        <name evidence="4">a</name>
        <name evidence="4">B</name>
        <sequence type="displayed"/>
    </isoform>
    <isoform>
        <id>Q9GNK5-2</id>
        <name evidence="5">x</name>
        <name evidence="5">A</name>
        <sequence type="described" ref="VSP_050759"/>
    </isoform>
    <isoform>
        <id>Q9GNK5-3</id>
        <name evidence="7">y</name>
        <name evidence="7">C</name>
        <sequence type="described" ref="VSP_050760"/>
    </isoform>
</comment>
<comment type="tissue specificity">
    <text evidence="4">Expressed in the fat body and hemocytes.</text>
</comment>
<comment type="developmental stage">
    <text evidence="5">Expressed during larval and pupal stages.</text>
</comment>
<comment type="PTM">
    <text evidence="11 12">Proteolytically cleaved, probably by a metaloprotease such as Mmp2; proteolytic cleavage leads to activation of the imd/Relish signaling pathway.</text>
</comment>
<comment type="disruption phenotype">
    <text evidence="10">Larvae infected with Gram-negative bacteria fail to induce tracheal expression of the antimicrobial peptide gene Drs.</text>
</comment>
<comment type="similarity">
    <text evidence="18">Belongs to the N-acetylmuramoyl-L-alanine amidase 2 family.</text>
</comment>
<proteinExistence type="evidence at protein level"/>
<organism evidence="19">
    <name type="scientific">Drosophila melanogaster</name>
    <name type="common">Fruit fly</name>
    <dbReference type="NCBI Taxonomy" id="7227"/>
    <lineage>
        <taxon>Eukaryota</taxon>
        <taxon>Metazoa</taxon>
        <taxon>Ecdysozoa</taxon>
        <taxon>Arthropoda</taxon>
        <taxon>Hexapoda</taxon>
        <taxon>Insecta</taxon>
        <taxon>Pterygota</taxon>
        <taxon>Neoptera</taxon>
        <taxon>Endopterygota</taxon>
        <taxon>Diptera</taxon>
        <taxon>Brachycera</taxon>
        <taxon>Muscomorpha</taxon>
        <taxon>Ephydroidea</taxon>
        <taxon>Drosophilidae</taxon>
        <taxon>Drosophila</taxon>
        <taxon>Sophophora</taxon>
    </lineage>
</organism>